<gene>
    <name type="primary">NDUFA5</name>
</gene>
<reference key="1">
    <citation type="journal article" date="2006" name="Gene">
        <title>Adaptive selection of mitochondrial complex I subunits during primate radiation.</title>
        <authorList>
            <person name="Mishmar D."/>
            <person name="Ruiz-Pesini E."/>
            <person name="Mondragon-Palomino M."/>
            <person name="Procaccio V."/>
            <person name="Gaut B."/>
            <person name="Wallace D.C."/>
        </authorList>
    </citation>
    <scope>NUCLEOTIDE SEQUENCE [MRNA]</scope>
</reference>
<feature type="initiator methionine" description="Removed" evidence="1">
    <location>
        <position position="1"/>
    </location>
</feature>
<feature type="chain" id="PRO_0000251803" description="NADH dehydrogenase [ubiquinone] 1 alpha subcomplex subunit 5">
    <location>
        <begin position="2"/>
        <end position="116"/>
    </location>
</feature>
<feature type="modified residue" description="N-acetylalanine" evidence="1">
    <location>
        <position position="2"/>
    </location>
</feature>
<feature type="modified residue" description="N6-acetyllysine" evidence="2">
    <location>
        <position position="30"/>
    </location>
</feature>
<feature type="modified residue" description="N6-acetyllysine" evidence="3">
    <location>
        <position position="46"/>
    </location>
</feature>
<feature type="modified residue" description="N6-acetyllysine" evidence="2">
    <location>
        <position position="60"/>
    </location>
</feature>
<feature type="modified residue" description="N6-acetyllysine; alternate" evidence="3">
    <location>
        <position position="98"/>
    </location>
</feature>
<feature type="modified residue" description="N6-succinyllysine; alternate" evidence="3">
    <location>
        <position position="98"/>
    </location>
</feature>
<organism>
    <name type="scientific">Gorilla gorilla gorilla</name>
    <name type="common">Western lowland gorilla</name>
    <dbReference type="NCBI Taxonomy" id="9595"/>
    <lineage>
        <taxon>Eukaryota</taxon>
        <taxon>Metazoa</taxon>
        <taxon>Chordata</taxon>
        <taxon>Craniata</taxon>
        <taxon>Vertebrata</taxon>
        <taxon>Euteleostomi</taxon>
        <taxon>Mammalia</taxon>
        <taxon>Eutheria</taxon>
        <taxon>Euarchontoglires</taxon>
        <taxon>Primates</taxon>
        <taxon>Haplorrhini</taxon>
        <taxon>Catarrhini</taxon>
        <taxon>Hominidae</taxon>
        <taxon>Gorilla</taxon>
    </lineage>
</organism>
<accession>Q0MQA1</accession>
<name>NDUA5_GORGO</name>
<proteinExistence type="inferred from homology"/>
<comment type="function">
    <text evidence="2">Accessory subunit of the mitochondrial membrane respiratory chain NADH dehydrogenase (Complex I), that is believed not to be involved in catalysis. Complex I functions in the transfer of electrons from NADH to the respiratory chain. The immediate electron acceptor for the enzyme is believed to be ubiquinone.</text>
</comment>
<comment type="subunit">
    <text evidence="2">Complex I is composed of 45 different subunits.</text>
</comment>
<comment type="subcellular location">
    <subcellularLocation>
        <location evidence="2">Mitochondrion inner membrane</location>
        <topology evidence="2">Peripheral membrane protein</topology>
        <orientation evidence="2">Matrix side</orientation>
    </subcellularLocation>
</comment>
<comment type="similarity">
    <text evidence="4">Belongs to the complex I NDUFA5 subunit family.</text>
</comment>
<keyword id="KW-0007">Acetylation</keyword>
<keyword id="KW-0249">Electron transport</keyword>
<keyword id="KW-0472">Membrane</keyword>
<keyword id="KW-0496">Mitochondrion</keyword>
<keyword id="KW-0999">Mitochondrion inner membrane</keyword>
<keyword id="KW-1185">Reference proteome</keyword>
<keyword id="KW-0679">Respiratory chain</keyword>
<keyword id="KW-0813">Transport</keyword>
<protein>
    <recommendedName>
        <fullName>NADH dehydrogenase [ubiquinone] 1 alpha subcomplex subunit 5</fullName>
    </recommendedName>
    <alternativeName>
        <fullName>Complex I subunit B13</fullName>
    </alternativeName>
    <alternativeName>
        <fullName>Complex I-13kD-B</fullName>
        <shortName>CI-13kD-B</shortName>
    </alternativeName>
    <alternativeName>
        <fullName>NADH-ubiquinone oxidoreductase 13 kDa-B subunit</fullName>
    </alternativeName>
</protein>
<sequence>MAGVLKKTTGLVGLAVCNTPHERLRILYTKILDVLEEIPKNAAYRKYTEQITNEKLAMVKAEPDVKKLEDQLQGGQLEEVILQAEHELNLARKMREWKLWEPLVEEPPADQWKWPI</sequence>
<evidence type="ECO:0000250" key="1">
    <source>
        <dbReference type="UniProtKB" id="P23935"/>
    </source>
</evidence>
<evidence type="ECO:0000250" key="2">
    <source>
        <dbReference type="UniProtKB" id="Q16718"/>
    </source>
</evidence>
<evidence type="ECO:0000250" key="3">
    <source>
        <dbReference type="UniProtKB" id="Q9CPP6"/>
    </source>
</evidence>
<evidence type="ECO:0000305" key="4"/>
<dbReference type="EMBL" id="DQ885733">
    <property type="protein sequence ID" value="ABH12242.1"/>
    <property type="molecule type" value="mRNA"/>
</dbReference>
<dbReference type="RefSeq" id="NP_001266684.1">
    <property type="nucleotide sequence ID" value="NM_001279755.1"/>
</dbReference>
<dbReference type="SMR" id="Q0MQA1"/>
<dbReference type="FunCoup" id="Q0MQA1">
    <property type="interactions" value="1032"/>
</dbReference>
<dbReference type="STRING" id="9593.ENSGGOP00000049523"/>
<dbReference type="Ensembl" id="ENSGGOT00000068681.1">
    <property type="protein sequence ID" value="ENSGGOP00000040760.1"/>
    <property type="gene ID" value="ENSGGOG00000022922.2"/>
</dbReference>
<dbReference type="GeneID" id="101148914"/>
<dbReference type="KEGG" id="ggo:101148914"/>
<dbReference type="CTD" id="4698"/>
<dbReference type="eggNOG" id="KOG3365">
    <property type="taxonomic scope" value="Eukaryota"/>
</dbReference>
<dbReference type="GeneTree" id="ENSGT00390000008099"/>
<dbReference type="HOGENOM" id="CLU_099943_2_0_1"/>
<dbReference type="InParanoid" id="Q0MQA1"/>
<dbReference type="Proteomes" id="UP000001519">
    <property type="component" value="Chromosome 7"/>
</dbReference>
<dbReference type="Bgee" id="ENSGGOG00000022922">
    <property type="expression patterns" value="Expressed in heart and 6 other cell types or tissues"/>
</dbReference>
<dbReference type="GO" id="GO:0005743">
    <property type="term" value="C:mitochondrial inner membrane"/>
    <property type="evidence" value="ECO:0007669"/>
    <property type="project" value="UniProtKB-SubCell"/>
</dbReference>
<dbReference type="GO" id="GO:0045271">
    <property type="term" value="C:respiratory chain complex I"/>
    <property type="evidence" value="ECO:0000250"/>
    <property type="project" value="UniProtKB"/>
</dbReference>
<dbReference type="GO" id="GO:0022904">
    <property type="term" value="P:respiratory electron transport chain"/>
    <property type="evidence" value="ECO:0000318"/>
    <property type="project" value="GO_Central"/>
</dbReference>
<dbReference type="InterPro" id="IPR006806">
    <property type="entry name" value="NDUFA5"/>
</dbReference>
<dbReference type="PANTHER" id="PTHR12653:SF0">
    <property type="entry name" value="NADH DEHYDROGENASE [UBIQUINONE] 1 ALPHA SUBCOMPLEX SUBUNIT 5"/>
    <property type="match status" value="1"/>
</dbReference>
<dbReference type="PANTHER" id="PTHR12653">
    <property type="entry name" value="NADH-UBIQUINONE OXIDOREDUCTASE 13 KD-B SUBUNIT"/>
    <property type="match status" value="1"/>
</dbReference>
<dbReference type="Pfam" id="PF04716">
    <property type="entry name" value="ETC_C1_NDUFA5"/>
    <property type="match status" value="1"/>
</dbReference>